<reference key="1">
    <citation type="journal article" date="2005" name="J. Bacteriol.">
        <title>Insights into genome plasticity and pathogenicity of the plant pathogenic Bacterium Xanthomonas campestris pv. vesicatoria revealed by the complete genome sequence.</title>
        <authorList>
            <person name="Thieme F."/>
            <person name="Koebnik R."/>
            <person name="Bekel T."/>
            <person name="Berger C."/>
            <person name="Boch J."/>
            <person name="Buettner D."/>
            <person name="Caldana C."/>
            <person name="Gaigalat L."/>
            <person name="Goesmann A."/>
            <person name="Kay S."/>
            <person name="Kirchner O."/>
            <person name="Lanz C."/>
            <person name="Linke B."/>
            <person name="McHardy A.C."/>
            <person name="Meyer F."/>
            <person name="Mittenhuber G."/>
            <person name="Nies D.H."/>
            <person name="Niesbach-Kloesgen U."/>
            <person name="Patschkowski T."/>
            <person name="Rueckert C."/>
            <person name="Rupp O."/>
            <person name="Schneiker S."/>
            <person name="Schuster S.C."/>
            <person name="Vorhoelter F.J."/>
            <person name="Weber E."/>
            <person name="Puehler A."/>
            <person name="Bonas U."/>
            <person name="Bartels D."/>
            <person name="Kaiser O."/>
        </authorList>
    </citation>
    <scope>NUCLEOTIDE SEQUENCE [LARGE SCALE GENOMIC DNA]</scope>
    <source>
        <strain>85-10</strain>
    </source>
</reference>
<dbReference type="EC" id="5.3.1.17" evidence="1"/>
<dbReference type="EMBL" id="AM039952">
    <property type="protein sequence ID" value="CAJ21783.1"/>
    <property type="molecule type" value="Genomic_DNA"/>
</dbReference>
<dbReference type="RefSeq" id="WP_011345891.1">
    <property type="nucleotide sequence ID" value="NZ_CP017190.1"/>
</dbReference>
<dbReference type="SMR" id="Q3BZD0"/>
<dbReference type="STRING" id="456327.BJD11_22175"/>
<dbReference type="GeneID" id="63989424"/>
<dbReference type="KEGG" id="xcv:XCV0152"/>
<dbReference type="eggNOG" id="COG3717">
    <property type="taxonomic scope" value="Bacteria"/>
</dbReference>
<dbReference type="HOGENOM" id="CLU_062609_0_0_6"/>
<dbReference type="UniPathway" id="UPA00545">
    <property type="reaction ID" value="UER00826"/>
</dbReference>
<dbReference type="Proteomes" id="UP000007069">
    <property type="component" value="Chromosome"/>
</dbReference>
<dbReference type="GO" id="GO:0008697">
    <property type="term" value="F:4-deoxy-L-threo-5-hexosulose-uronate ketol-isomerase activity"/>
    <property type="evidence" value="ECO:0007669"/>
    <property type="project" value="UniProtKB-UniRule"/>
</dbReference>
<dbReference type="GO" id="GO:0008270">
    <property type="term" value="F:zinc ion binding"/>
    <property type="evidence" value="ECO:0007669"/>
    <property type="project" value="UniProtKB-UniRule"/>
</dbReference>
<dbReference type="GO" id="GO:0019698">
    <property type="term" value="P:D-galacturonate catabolic process"/>
    <property type="evidence" value="ECO:0007669"/>
    <property type="project" value="TreeGrafter"/>
</dbReference>
<dbReference type="GO" id="GO:0042840">
    <property type="term" value="P:D-glucuronate catabolic process"/>
    <property type="evidence" value="ECO:0007669"/>
    <property type="project" value="TreeGrafter"/>
</dbReference>
<dbReference type="GO" id="GO:0045490">
    <property type="term" value="P:pectin catabolic process"/>
    <property type="evidence" value="ECO:0007669"/>
    <property type="project" value="UniProtKB-UniRule"/>
</dbReference>
<dbReference type="CDD" id="cd20491">
    <property type="entry name" value="cupin_KduI_C"/>
    <property type="match status" value="1"/>
</dbReference>
<dbReference type="CDD" id="cd20294">
    <property type="entry name" value="cupin_KduI_N"/>
    <property type="match status" value="1"/>
</dbReference>
<dbReference type="Gene3D" id="2.60.120.10">
    <property type="entry name" value="Jelly Rolls"/>
    <property type="match status" value="1"/>
</dbReference>
<dbReference type="Gene3D" id="2.60.120.520">
    <property type="entry name" value="pectin degrading enzyme 5-keto 4- deoxyuronate isomerase, domain 1"/>
    <property type="match status" value="1"/>
</dbReference>
<dbReference type="HAMAP" id="MF_00687">
    <property type="entry name" value="KduI"/>
    <property type="match status" value="1"/>
</dbReference>
<dbReference type="InterPro" id="IPR007045">
    <property type="entry name" value="KduI"/>
</dbReference>
<dbReference type="InterPro" id="IPR021120">
    <property type="entry name" value="KduI/IolB_isomerase"/>
</dbReference>
<dbReference type="InterPro" id="IPR027449">
    <property type="entry name" value="KduI_N"/>
</dbReference>
<dbReference type="InterPro" id="IPR014710">
    <property type="entry name" value="RmlC-like_jellyroll"/>
</dbReference>
<dbReference type="InterPro" id="IPR011051">
    <property type="entry name" value="RmlC_Cupin_sf"/>
</dbReference>
<dbReference type="NCBIfam" id="NF002091">
    <property type="entry name" value="PRK00924.1"/>
    <property type="match status" value="1"/>
</dbReference>
<dbReference type="PANTHER" id="PTHR38461">
    <property type="entry name" value="4-DEOXY-L-THREO-5-HEXOSULOSE-URONATE KETOL-ISOMERASE"/>
    <property type="match status" value="1"/>
</dbReference>
<dbReference type="PANTHER" id="PTHR38461:SF1">
    <property type="entry name" value="4-DEOXY-L-THREO-5-HEXOSULOSE-URONATE KETOL-ISOMERASE"/>
    <property type="match status" value="1"/>
</dbReference>
<dbReference type="Pfam" id="PF04962">
    <property type="entry name" value="KduI"/>
    <property type="match status" value="1"/>
</dbReference>
<dbReference type="PIRSF" id="PIRSF006625">
    <property type="entry name" value="KduI"/>
    <property type="match status" value="1"/>
</dbReference>
<dbReference type="SUPFAM" id="SSF51182">
    <property type="entry name" value="RmlC-like cupins"/>
    <property type="match status" value="1"/>
</dbReference>
<gene>
    <name evidence="1" type="primary">kduI</name>
    <name type="ordered locus">XCV0152</name>
</gene>
<accession>Q3BZD0</accession>
<sequence>MSLYCKTHYATHPDAIKGASNDALRELYLLDGLFVDDAVTLKYTHYERFVLGGAAPLGKTLELPRQTEPASAAGHPFLERRELGVLNVGAGTGTVTVDGTAYTLGPKDGLYVAMGSTDVSFASADAANPAKFYLASTPAHARFETKQLSIKDAVALERGALETSNERTIYQYIVPATCQSSQLLLGLTVLKPGSVWNTMPPHLHDRRSEVYFYFDLGANDRVYHFMGEPDAQRHIVIQNNEAVVSPPWSIHMGAGTSNYAFIWAMGGENLDYTDMHVLDICQLK</sequence>
<comment type="function">
    <text evidence="1">Catalyzes the isomerization of 5-dehydro-4-deoxy-D-glucuronate to 3-deoxy-D-glycero-2,5-hexodiulosonate.</text>
</comment>
<comment type="catalytic activity">
    <reaction evidence="1">
        <text>5-dehydro-4-deoxy-D-glucuronate = 3-deoxy-D-glycero-2,5-hexodiulosonate</text>
        <dbReference type="Rhea" id="RHEA:23896"/>
        <dbReference type="ChEBI" id="CHEBI:17117"/>
        <dbReference type="ChEBI" id="CHEBI:29071"/>
        <dbReference type="EC" id="5.3.1.17"/>
    </reaction>
</comment>
<comment type="cofactor">
    <cofactor evidence="1">
        <name>Zn(2+)</name>
        <dbReference type="ChEBI" id="CHEBI:29105"/>
    </cofactor>
    <text evidence="1">Binds 1 zinc ion per subunit.</text>
</comment>
<comment type="pathway">
    <text evidence="1">Glycan metabolism; pectin degradation; 2-dehydro-3-deoxy-D-gluconate from pectin: step 4/5.</text>
</comment>
<comment type="similarity">
    <text evidence="1">Belongs to the KduI family.</text>
</comment>
<proteinExistence type="inferred from homology"/>
<feature type="chain" id="PRO_1000045093" description="4-deoxy-L-threo-5-hexosulose-uronate ketol-isomerase">
    <location>
        <begin position="1"/>
        <end position="284"/>
    </location>
</feature>
<feature type="binding site" evidence="1">
    <location>
        <position position="202"/>
    </location>
    <ligand>
        <name>Zn(2+)</name>
        <dbReference type="ChEBI" id="CHEBI:29105"/>
    </ligand>
</feature>
<feature type="binding site" evidence="1">
    <location>
        <position position="204"/>
    </location>
    <ligand>
        <name>Zn(2+)</name>
        <dbReference type="ChEBI" id="CHEBI:29105"/>
    </ligand>
</feature>
<feature type="binding site" evidence="1">
    <location>
        <position position="209"/>
    </location>
    <ligand>
        <name>Zn(2+)</name>
        <dbReference type="ChEBI" id="CHEBI:29105"/>
    </ligand>
</feature>
<feature type="binding site" evidence="1">
    <location>
        <position position="251"/>
    </location>
    <ligand>
        <name>Zn(2+)</name>
        <dbReference type="ChEBI" id="CHEBI:29105"/>
    </ligand>
</feature>
<organism>
    <name type="scientific">Xanthomonas euvesicatoria pv. vesicatoria (strain 85-10)</name>
    <name type="common">Xanthomonas campestris pv. vesicatoria</name>
    <dbReference type="NCBI Taxonomy" id="316273"/>
    <lineage>
        <taxon>Bacteria</taxon>
        <taxon>Pseudomonadati</taxon>
        <taxon>Pseudomonadota</taxon>
        <taxon>Gammaproteobacteria</taxon>
        <taxon>Lysobacterales</taxon>
        <taxon>Lysobacteraceae</taxon>
        <taxon>Xanthomonas</taxon>
    </lineage>
</organism>
<keyword id="KW-0413">Isomerase</keyword>
<keyword id="KW-0479">Metal-binding</keyword>
<keyword id="KW-0862">Zinc</keyword>
<evidence type="ECO:0000255" key="1">
    <source>
        <dbReference type="HAMAP-Rule" id="MF_00687"/>
    </source>
</evidence>
<name>KDUI_XANE5</name>
<protein>
    <recommendedName>
        <fullName evidence="1">4-deoxy-L-threo-5-hexosulose-uronate ketol-isomerase</fullName>
        <ecNumber evidence="1">5.3.1.17</ecNumber>
    </recommendedName>
    <alternativeName>
        <fullName evidence="1">5-keto-4-deoxyuronate isomerase</fullName>
    </alternativeName>
    <alternativeName>
        <fullName evidence="1">DKI isomerase</fullName>
    </alternativeName>
</protein>